<proteinExistence type="evidence at protein level"/>
<dbReference type="EMBL" id="AY302699">
    <property type="protein sequence ID" value="AAP59447.1"/>
    <property type="molecule type" value="mRNA"/>
</dbReference>
<dbReference type="EMBL" id="AB040971">
    <property type="protein sequence ID" value="BAA96062.2"/>
    <property type="status" value="ALT_INIT"/>
    <property type="molecule type" value="mRNA"/>
</dbReference>
<dbReference type="EMBL" id="AK122971">
    <property type="protein sequence ID" value="BAG53828.1"/>
    <property type="molecule type" value="mRNA"/>
</dbReference>
<dbReference type="EMBL" id="CH471108">
    <property type="protein sequence ID" value="EAW90185.1"/>
    <property type="molecule type" value="Genomic_DNA"/>
</dbReference>
<dbReference type="EMBL" id="BC033259">
    <property type="protein sequence ID" value="AAH33259.1"/>
    <property type="molecule type" value="mRNA"/>
</dbReference>
<dbReference type="EMBL" id="BC043352">
    <property type="protein sequence ID" value="AAH43352.1"/>
    <property type="molecule type" value="mRNA"/>
</dbReference>
<dbReference type="CCDS" id="CCDS11107.1"/>
<dbReference type="RefSeq" id="NP_001122305.1">
    <property type="nucleotide sequence ID" value="NM_001128833.2"/>
</dbReference>
<dbReference type="RefSeq" id="NP_065950.2">
    <property type="nucleotide sequence ID" value="NM_020899.4"/>
</dbReference>
<dbReference type="RefSeq" id="XP_006721626.1">
    <property type="nucleotide sequence ID" value="XM_006721563.4"/>
</dbReference>
<dbReference type="RefSeq" id="XP_006721627.1">
    <property type="nucleotide sequence ID" value="XM_006721564.3"/>
</dbReference>
<dbReference type="RefSeq" id="XP_011522274.1">
    <property type="nucleotide sequence ID" value="XM_011523972.2"/>
</dbReference>
<dbReference type="RefSeq" id="XP_047292437.1">
    <property type="nucleotide sequence ID" value="XM_047436481.1"/>
</dbReference>
<dbReference type="RefSeq" id="XP_054172762.1">
    <property type="nucleotide sequence ID" value="XM_054316787.1"/>
</dbReference>
<dbReference type="RefSeq" id="XP_054172763.1">
    <property type="nucleotide sequence ID" value="XM_054316788.1"/>
</dbReference>
<dbReference type="RefSeq" id="XP_054172764.1">
    <property type="nucleotide sequence ID" value="XM_054316789.1"/>
</dbReference>
<dbReference type="RefSeq" id="XP_054172765.1">
    <property type="nucleotide sequence ID" value="XM_054316790.1"/>
</dbReference>
<dbReference type="RefSeq" id="XP_054172766.1">
    <property type="nucleotide sequence ID" value="XM_054316791.1"/>
</dbReference>
<dbReference type="RefSeq" id="XP_054172767.1">
    <property type="nucleotide sequence ID" value="XM_054316792.1"/>
</dbReference>
<dbReference type="RefSeq" id="XP_054172768.1">
    <property type="nucleotide sequence ID" value="XM_054316793.1"/>
</dbReference>
<dbReference type="RefSeq" id="XP_054187995.1">
    <property type="nucleotide sequence ID" value="XM_054332020.1"/>
</dbReference>
<dbReference type="RefSeq" id="XP_054187996.1">
    <property type="nucleotide sequence ID" value="XM_054332021.1"/>
</dbReference>
<dbReference type="RefSeq" id="XP_054187997.1">
    <property type="nucleotide sequence ID" value="XM_054332022.1"/>
</dbReference>
<dbReference type="RefSeq" id="XP_054187998.1">
    <property type="nucleotide sequence ID" value="XM_054332023.1"/>
</dbReference>
<dbReference type="RefSeq" id="XP_054187999.1">
    <property type="nucleotide sequence ID" value="XM_054332024.1"/>
</dbReference>
<dbReference type="RefSeq" id="XP_054188000.1">
    <property type="nucleotide sequence ID" value="XM_054332025.1"/>
</dbReference>
<dbReference type="BioGRID" id="121693">
    <property type="interactions" value="32"/>
</dbReference>
<dbReference type="FunCoup" id="Q9P1Z0">
    <property type="interactions" value="2444"/>
</dbReference>
<dbReference type="IntAct" id="Q9P1Z0">
    <property type="interactions" value="21"/>
</dbReference>
<dbReference type="MINT" id="Q9P1Z0"/>
<dbReference type="STRING" id="9606.ENSP00000307858"/>
<dbReference type="CarbonylDB" id="Q9P1Z0"/>
<dbReference type="GlyGen" id="Q9P1Z0">
    <property type="glycosylation" value="4 sites"/>
</dbReference>
<dbReference type="iPTMnet" id="Q9P1Z0"/>
<dbReference type="PhosphoSitePlus" id="Q9P1Z0"/>
<dbReference type="BioMuta" id="ZBTB4"/>
<dbReference type="DMDM" id="46577564"/>
<dbReference type="jPOST" id="Q9P1Z0"/>
<dbReference type="MassIVE" id="Q9P1Z0"/>
<dbReference type="PaxDb" id="9606-ENSP00000307858"/>
<dbReference type="PeptideAtlas" id="Q9P1Z0"/>
<dbReference type="ProteomicsDB" id="83682"/>
<dbReference type="Antibodypedia" id="24133">
    <property type="antibodies" value="162 antibodies from 23 providers"/>
</dbReference>
<dbReference type="DNASU" id="57659"/>
<dbReference type="Ensembl" id="ENST00000311403.4">
    <property type="protein sequence ID" value="ENSP00000307858.4"/>
    <property type="gene ID" value="ENSG00000174282.12"/>
</dbReference>
<dbReference type="Ensembl" id="ENST00000380599.9">
    <property type="protein sequence ID" value="ENSP00000369973.4"/>
    <property type="gene ID" value="ENSG00000174282.12"/>
</dbReference>
<dbReference type="Ensembl" id="ENST00000639670.2">
    <property type="protein sequence ID" value="ENSP00000492232.1"/>
    <property type="gene ID" value="ENSG00000283868.2"/>
</dbReference>
<dbReference type="Ensembl" id="ENST00000639962.1">
    <property type="protein sequence ID" value="ENSP00000492616.1"/>
    <property type="gene ID" value="ENSG00000283868.2"/>
</dbReference>
<dbReference type="GeneID" id="57659"/>
<dbReference type="KEGG" id="hsa:57659"/>
<dbReference type="MANE-Select" id="ENST00000380599.9">
    <property type="protein sequence ID" value="ENSP00000369973.4"/>
    <property type="RefSeq nucleotide sequence ID" value="NM_001128833.2"/>
    <property type="RefSeq protein sequence ID" value="NP_001122305.1"/>
</dbReference>
<dbReference type="UCSC" id="uc002ghc.5">
    <property type="organism name" value="human"/>
</dbReference>
<dbReference type="AGR" id="HGNC:23847"/>
<dbReference type="CTD" id="57659"/>
<dbReference type="DisGeNET" id="57659"/>
<dbReference type="GeneCards" id="ZBTB4"/>
<dbReference type="HGNC" id="HGNC:23847">
    <property type="gene designation" value="ZBTB4"/>
</dbReference>
<dbReference type="HPA" id="ENSG00000174282">
    <property type="expression patterns" value="Low tissue specificity"/>
</dbReference>
<dbReference type="MIM" id="612308">
    <property type="type" value="gene"/>
</dbReference>
<dbReference type="neXtProt" id="NX_Q9P1Z0"/>
<dbReference type="OpenTargets" id="ENSG00000174282"/>
<dbReference type="PharmGKB" id="PA134959224"/>
<dbReference type="VEuPathDB" id="HostDB:ENSG00000174282"/>
<dbReference type="eggNOG" id="KOG1721">
    <property type="taxonomic scope" value="Eukaryota"/>
</dbReference>
<dbReference type="GeneTree" id="ENSGT00940000161268"/>
<dbReference type="HOGENOM" id="CLU_007011_1_0_1"/>
<dbReference type="InParanoid" id="Q9P1Z0"/>
<dbReference type="OMA" id="VIAFAHP"/>
<dbReference type="OrthoDB" id="8922241at2759"/>
<dbReference type="PAN-GO" id="Q9P1Z0">
    <property type="GO annotations" value="3 GO annotations based on evolutionary models"/>
</dbReference>
<dbReference type="PhylomeDB" id="Q9P1Z0"/>
<dbReference type="TreeFam" id="TF333100"/>
<dbReference type="PathwayCommons" id="Q9P1Z0"/>
<dbReference type="SignaLink" id="Q9P1Z0"/>
<dbReference type="SIGNOR" id="Q9P1Z0"/>
<dbReference type="BioGRID-ORCS" id="57659">
    <property type="hits" value="39 hits in 1214 CRISPR screens"/>
</dbReference>
<dbReference type="CD-CODE" id="8C2F96ED">
    <property type="entry name" value="Centrosome"/>
</dbReference>
<dbReference type="ChiTaRS" id="ZBTB4">
    <property type="organism name" value="human"/>
</dbReference>
<dbReference type="GenomeRNAi" id="57659"/>
<dbReference type="Pharos" id="Q9P1Z0">
    <property type="development level" value="Tbio"/>
</dbReference>
<dbReference type="PRO" id="PR:Q9P1Z0"/>
<dbReference type="Proteomes" id="UP000005640">
    <property type="component" value="Chromosome 17"/>
</dbReference>
<dbReference type="RNAct" id="Q9P1Z0">
    <property type="molecule type" value="protein"/>
</dbReference>
<dbReference type="Bgee" id="ENSG00000174282">
    <property type="expression patterns" value="Expressed in primary visual cortex and 106 other cell types or tissues"/>
</dbReference>
<dbReference type="GO" id="GO:0005694">
    <property type="term" value="C:chromosome"/>
    <property type="evidence" value="ECO:0007669"/>
    <property type="project" value="UniProtKB-SubCell"/>
</dbReference>
<dbReference type="GO" id="GO:0005829">
    <property type="term" value="C:cytosol"/>
    <property type="evidence" value="ECO:0000314"/>
    <property type="project" value="HPA"/>
</dbReference>
<dbReference type="GO" id="GO:0016604">
    <property type="term" value="C:nuclear body"/>
    <property type="evidence" value="ECO:0000314"/>
    <property type="project" value="HPA"/>
</dbReference>
<dbReference type="GO" id="GO:0005654">
    <property type="term" value="C:nucleoplasm"/>
    <property type="evidence" value="ECO:0000314"/>
    <property type="project" value="HPA"/>
</dbReference>
<dbReference type="GO" id="GO:0005634">
    <property type="term" value="C:nucleus"/>
    <property type="evidence" value="ECO:0000314"/>
    <property type="project" value="UniProtKB"/>
</dbReference>
<dbReference type="GO" id="GO:0000981">
    <property type="term" value="F:DNA-binding transcription factor activity, RNA polymerase II-specific"/>
    <property type="evidence" value="ECO:0000318"/>
    <property type="project" value="GO_Central"/>
</dbReference>
<dbReference type="GO" id="GO:0001227">
    <property type="term" value="F:DNA-binding transcription repressor activity, RNA polymerase II-specific"/>
    <property type="evidence" value="ECO:0000314"/>
    <property type="project" value="NTNU_SB"/>
</dbReference>
<dbReference type="GO" id="GO:0008327">
    <property type="term" value="F:methyl-CpG binding"/>
    <property type="evidence" value="ECO:0000314"/>
    <property type="project" value="UniProtKB"/>
</dbReference>
<dbReference type="GO" id="GO:0010428">
    <property type="term" value="F:methyl-CpNpG binding"/>
    <property type="evidence" value="ECO:0000314"/>
    <property type="project" value="UniProtKB"/>
</dbReference>
<dbReference type="GO" id="GO:0042803">
    <property type="term" value="F:protein homodimerization activity"/>
    <property type="evidence" value="ECO:0000314"/>
    <property type="project" value="UniProtKB"/>
</dbReference>
<dbReference type="GO" id="GO:0019901">
    <property type="term" value="F:protein kinase binding"/>
    <property type="evidence" value="ECO:0000353"/>
    <property type="project" value="UniProtKB"/>
</dbReference>
<dbReference type="GO" id="GO:0000978">
    <property type="term" value="F:RNA polymerase II cis-regulatory region sequence-specific DNA binding"/>
    <property type="evidence" value="ECO:0000318"/>
    <property type="project" value="GO_Central"/>
</dbReference>
<dbReference type="GO" id="GO:0000977">
    <property type="term" value="F:RNA polymerase II transcription regulatory region sequence-specific DNA binding"/>
    <property type="evidence" value="ECO:0000314"/>
    <property type="project" value="NTNU_SB"/>
</dbReference>
<dbReference type="GO" id="GO:0043565">
    <property type="term" value="F:sequence-specific DNA binding"/>
    <property type="evidence" value="ECO:0000314"/>
    <property type="project" value="UniProtKB"/>
</dbReference>
<dbReference type="GO" id="GO:0008270">
    <property type="term" value="F:zinc ion binding"/>
    <property type="evidence" value="ECO:0007669"/>
    <property type="project" value="UniProtKB-KW"/>
</dbReference>
<dbReference type="GO" id="GO:0006974">
    <property type="term" value="P:DNA damage response"/>
    <property type="evidence" value="ECO:0000314"/>
    <property type="project" value="UniProtKB"/>
</dbReference>
<dbReference type="GO" id="GO:0045892">
    <property type="term" value="P:negative regulation of DNA-templated transcription"/>
    <property type="evidence" value="ECO:0000314"/>
    <property type="project" value="UniProtKB"/>
</dbReference>
<dbReference type="GO" id="GO:0000122">
    <property type="term" value="P:negative regulation of transcription by RNA polymerase II"/>
    <property type="evidence" value="ECO:0000314"/>
    <property type="project" value="NTNU_SB"/>
</dbReference>
<dbReference type="GO" id="GO:0006355">
    <property type="term" value="P:regulation of DNA-templated transcription"/>
    <property type="evidence" value="ECO:0000318"/>
    <property type="project" value="GO_Central"/>
</dbReference>
<dbReference type="FunFam" id="3.30.160.60:FF:000235">
    <property type="entry name" value="Zinc finger and BTB domain containing 38"/>
    <property type="match status" value="1"/>
</dbReference>
<dbReference type="FunFam" id="3.30.160.60:FF:001641">
    <property type="entry name" value="Zinc finger and BTB domain containing 4"/>
    <property type="match status" value="1"/>
</dbReference>
<dbReference type="FunFam" id="3.30.160.60:FF:000437">
    <property type="entry name" value="zinc finger and BTB domain-containing protein 38"/>
    <property type="match status" value="1"/>
</dbReference>
<dbReference type="FunFam" id="3.30.710.10:FF:000117">
    <property type="entry name" value="zinc finger and BTB domain-containing protein 4"/>
    <property type="match status" value="1"/>
</dbReference>
<dbReference type="Gene3D" id="3.30.160.60">
    <property type="entry name" value="Classic Zinc Finger"/>
    <property type="match status" value="4"/>
</dbReference>
<dbReference type="Gene3D" id="3.30.710.10">
    <property type="entry name" value="Potassium Channel Kv1.1, Chain A"/>
    <property type="match status" value="1"/>
</dbReference>
<dbReference type="InterPro" id="IPR000210">
    <property type="entry name" value="BTB/POZ_dom"/>
</dbReference>
<dbReference type="InterPro" id="IPR011333">
    <property type="entry name" value="SKP1/BTB/POZ_sf"/>
</dbReference>
<dbReference type="InterPro" id="IPR036236">
    <property type="entry name" value="Znf_C2H2_sf"/>
</dbReference>
<dbReference type="InterPro" id="IPR013087">
    <property type="entry name" value="Znf_C2H2_type"/>
</dbReference>
<dbReference type="PANTHER" id="PTHR24394">
    <property type="entry name" value="ZINC FINGER PROTEIN"/>
    <property type="match status" value="1"/>
</dbReference>
<dbReference type="PANTHER" id="PTHR24394:SF44">
    <property type="entry name" value="ZINC FINGER PROTEIN 271-LIKE"/>
    <property type="match status" value="1"/>
</dbReference>
<dbReference type="Pfam" id="PF00651">
    <property type="entry name" value="BTB"/>
    <property type="match status" value="1"/>
</dbReference>
<dbReference type="Pfam" id="PF00096">
    <property type="entry name" value="zf-C2H2"/>
    <property type="match status" value="1"/>
</dbReference>
<dbReference type="SMART" id="SM00225">
    <property type="entry name" value="BTB"/>
    <property type="match status" value="1"/>
</dbReference>
<dbReference type="SMART" id="SM00355">
    <property type="entry name" value="ZnF_C2H2"/>
    <property type="match status" value="6"/>
</dbReference>
<dbReference type="SUPFAM" id="SSF57667">
    <property type="entry name" value="beta-beta-alpha zinc fingers"/>
    <property type="match status" value="2"/>
</dbReference>
<dbReference type="SUPFAM" id="SSF54695">
    <property type="entry name" value="POZ domain"/>
    <property type="match status" value="1"/>
</dbReference>
<dbReference type="PROSITE" id="PS50097">
    <property type="entry name" value="BTB"/>
    <property type="match status" value="1"/>
</dbReference>
<dbReference type="PROSITE" id="PS00028">
    <property type="entry name" value="ZINC_FINGER_C2H2_1"/>
    <property type="match status" value="5"/>
</dbReference>
<dbReference type="PROSITE" id="PS50157">
    <property type="entry name" value="ZINC_FINGER_C2H2_2"/>
    <property type="match status" value="6"/>
</dbReference>
<comment type="function">
    <text evidence="1 6">Transcriptional repressor with bimodal DNA-binding specificity. Represses transcription in a methyl-CpG-dependent manner. Binds with a higher affinity to methylated CpG dinucleotides in the consensus sequence 5'-CGCG-3' but can also bind to the non-methylated consensus sequence 5'-CTGCNA-3' also known as the consensus kaiso binding site (KBS). Can also bind specifically to a single methyl-CpG pair and can bind hemimethylated DNA but with a lower affinity compared to methylated DNA (PubMed:16354688). Plays a role in postnatal myogenesis, may be involved in the regulation of satellite cells self-renewal (By similarity).</text>
</comment>
<comment type="subunit">
    <text evidence="6 7 8">Interacts with HIPK2. Interacts with CBFA2T3. Interacts with ZBTB38.</text>
</comment>
<comment type="interaction">
    <interactant intactId="EBI-2564133">
        <id>Q9P1Z0</id>
    </interactant>
    <interactant intactId="EBI-11524452">
        <id>Q8N9N5-2</id>
        <label>BANP</label>
    </interactant>
    <organismsDiffer>false</organismsDiffer>
    <experiments>3</experiments>
</comment>
<comment type="interaction">
    <interactant intactId="EBI-2564133">
        <id>Q9P1Z0</id>
    </interactant>
    <interactant intactId="EBI-739580">
        <id>Q13137</id>
        <label>CALCOCO2</label>
    </interactant>
    <organismsDiffer>false</organismsDiffer>
    <experiments>3</experiments>
</comment>
<comment type="interaction">
    <interactant intactId="EBI-2564133">
        <id>Q9P1Z0</id>
    </interactant>
    <interactant intactId="EBI-10961624">
        <id>Q2TAC2-2</id>
        <label>CCDC57</label>
    </interactant>
    <organismsDiffer>false</organismsDiffer>
    <experiments>3</experiments>
</comment>
<comment type="interaction">
    <interactant intactId="EBI-2564133">
        <id>Q9P1Z0</id>
    </interactant>
    <interactant intactId="EBI-739624">
        <id>Q8NHQ1</id>
        <label>CEP70</label>
    </interactant>
    <organismsDiffer>false</organismsDiffer>
    <experiments>3</experiments>
</comment>
<comment type="interaction">
    <interactant intactId="EBI-2564133">
        <id>Q9P1Z0</id>
    </interactant>
    <interactant intactId="EBI-742887">
        <id>Q8TAP6</id>
        <label>CEP76</label>
    </interactant>
    <organismsDiffer>false</organismsDiffer>
    <experiments>3</experiments>
</comment>
<comment type="interaction">
    <interactant intactId="EBI-2564133">
        <id>Q9P1Z0</id>
    </interactant>
    <interactant intactId="EBI-3867333">
        <id>A8MQ03</id>
        <label>CYSRT1</label>
    </interactant>
    <organismsDiffer>false</organismsDiffer>
    <experiments>3</experiments>
</comment>
<comment type="interaction">
    <interactant intactId="EBI-2564133">
        <id>Q9P1Z0</id>
    </interactant>
    <interactant intactId="EBI-618309">
        <id>Q08379</id>
        <label>GOLGA2</label>
    </interactant>
    <organismsDiffer>false</organismsDiffer>
    <experiments>3</experiments>
</comment>
<comment type="interaction">
    <interactant intactId="EBI-2564133">
        <id>Q9P1Z0</id>
    </interactant>
    <interactant intactId="EBI-748420">
        <id>Q9NSC5</id>
        <label>HOMER3</label>
    </interactant>
    <organismsDiffer>false</organismsDiffer>
    <experiments>3</experiments>
</comment>
<comment type="interaction">
    <interactant intactId="EBI-2564133">
        <id>Q9P1Z0</id>
    </interactant>
    <interactant intactId="EBI-740929">
        <id>Q53G59</id>
        <label>KLHL12</label>
    </interactant>
    <organismsDiffer>false</organismsDiffer>
    <experiments>3</experiments>
</comment>
<comment type="interaction">
    <interactant intactId="EBI-2564133">
        <id>Q9P1Z0</id>
    </interactant>
    <interactant intactId="EBI-9640281">
        <id>Q5VU43-2</id>
        <label>PDE4DIP</label>
    </interactant>
    <organismsDiffer>false</organismsDiffer>
    <experiments>3</experiments>
</comment>
<comment type="interaction">
    <interactant intactId="EBI-2564133">
        <id>Q9P1Z0</id>
    </interactant>
    <interactant intactId="EBI-14066006">
        <id>Q4G0R1</id>
        <label>PIBF1</label>
    </interactant>
    <organismsDiffer>false</organismsDiffer>
    <experiments>3</experiments>
</comment>
<comment type="interaction">
    <interactant intactId="EBI-2564133">
        <id>Q9P1Z0</id>
    </interactant>
    <interactant intactId="EBI-12029004">
        <id>P78424</id>
        <label>POU6F2</label>
    </interactant>
    <organismsDiffer>false</organismsDiffer>
    <experiments>3</experiments>
</comment>
<comment type="interaction">
    <interactant intactId="EBI-2564133">
        <id>Q9P1Z0</id>
    </interactant>
    <interactant intactId="EBI-11952721">
        <id>Q05BL1</id>
        <label>TP53BP2</label>
    </interactant>
    <organismsDiffer>false</organismsDiffer>
    <experiments>3</experiments>
</comment>
<comment type="interaction">
    <interactant intactId="EBI-2564133">
        <id>Q9P1Z0</id>
    </interactant>
    <interactant intactId="EBI-740098">
        <id>P36406</id>
        <label>TRIM23</label>
    </interactant>
    <organismsDiffer>false</organismsDiffer>
    <experiments>3</experiments>
</comment>
<comment type="subcellular location">
    <subcellularLocation>
        <location evidence="6">Nucleus</location>
    </subcellularLocation>
    <subcellularLocation>
        <location evidence="6">Chromosome</location>
    </subcellularLocation>
    <text evidence="6">Localizes to chromocenters.</text>
</comment>
<comment type="PTM">
    <text evidence="7">Phosphorylated by HIPK2. This phosphorylation reduces stability and triggers ZBTB4 protein degradation in response to DNA damage.</text>
</comment>
<comment type="sequence caution" evidence="9">
    <conflict type="erroneous initiation">
        <sequence resource="EMBL-CDS" id="BAA96062"/>
    </conflict>
    <text>Extended N-terminus.</text>
</comment>
<protein>
    <recommendedName>
        <fullName>Zinc finger and BTB domain-containing protein 4</fullName>
    </recommendedName>
    <alternativeName>
        <fullName>KAISO-like zinc finger protein 1</fullName>
        <shortName>KAISO-L1</shortName>
    </alternativeName>
</protein>
<feature type="chain" id="PRO_0000047712" description="Zinc finger and BTB domain-containing protein 4">
    <location>
        <begin position="1"/>
        <end position="1013"/>
    </location>
</feature>
<feature type="domain" description="BTB" evidence="3">
    <location>
        <begin position="30"/>
        <end position="152"/>
    </location>
</feature>
<feature type="zinc finger region" description="C2H2-type 1; atypical" evidence="4">
    <location>
        <begin position="234"/>
        <end position="256"/>
    </location>
</feature>
<feature type="zinc finger region" description="C2H2-type 2" evidence="4">
    <location>
        <begin position="309"/>
        <end position="331"/>
    </location>
</feature>
<feature type="zinc finger region" description="C2H2-type 3" evidence="4">
    <location>
        <begin position="337"/>
        <end position="359"/>
    </location>
</feature>
<feature type="zinc finger region" description="C2H2-type 4" evidence="4">
    <location>
        <begin position="365"/>
        <end position="388"/>
    </location>
</feature>
<feature type="zinc finger region" description="C2H2-type 5" evidence="4">
    <location>
        <begin position="726"/>
        <end position="748"/>
    </location>
</feature>
<feature type="zinc finger region" description="C2H2-type 6" evidence="4">
    <location>
        <begin position="765"/>
        <end position="787"/>
    </location>
</feature>
<feature type="region of interest" description="Disordered" evidence="5">
    <location>
        <begin position="67"/>
        <end position="124"/>
    </location>
</feature>
<feature type="region of interest" description="Disordered" evidence="5">
    <location>
        <begin position="183"/>
        <end position="221"/>
    </location>
</feature>
<feature type="region of interest" description="Interaction with CBFA2T3" evidence="8">
    <location>
        <begin position="186"/>
        <end position="348"/>
    </location>
</feature>
<feature type="region of interest" description="Disordered" evidence="5">
    <location>
        <begin position="257"/>
        <end position="281"/>
    </location>
</feature>
<feature type="region of interest" description="Disordered" evidence="5">
    <location>
        <begin position="428"/>
        <end position="765"/>
    </location>
</feature>
<feature type="region of interest" description="Disordered" evidence="5">
    <location>
        <begin position="783"/>
        <end position="852"/>
    </location>
</feature>
<feature type="region of interest" description="Disordered" evidence="5">
    <location>
        <begin position="883"/>
        <end position="904"/>
    </location>
</feature>
<feature type="region of interest" description="Disordered" evidence="5">
    <location>
        <begin position="972"/>
        <end position="1013"/>
    </location>
</feature>
<feature type="coiled-coil region" evidence="2">
    <location>
        <begin position="627"/>
        <end position="663"/>
    </location>
</feature>
<feature type="compositionally biased region" description="Low complexity" evidence="5">
    <location>
        <begin position="67"/>
        <end position="110"/>
    </location>
</feature>
<feature type="compositionally biased region" description="Pro residues" evidence="5">
    <location>
        <begin position="111"/>
        <end position="121"/>
    </location>
</feature>
<feature type="compositionally biased region" description="Gly residues" evidence="5">
    <location>
        <begin position="266"/>
        <end position="279"/>
    </location>
</feature>
<feature type="compositionally biased region" description="Pro residues" evidence="5">
    <location>
        <begin position="453"/>
        <end position="470"/>
    </location>
</feature>
<feature type="compositionally biased region" description="Low complexity" evidence="5">
    <location>
        <begin position="496"/>
        <end position="506"/>
    </location>
</feature>
<feature type="compositionally biased region" description="Low complexity" evidence="5">
    <location>
        <begin position="531"/>
        <end position="554"/>
    </location>
</feature>
<feature type="compositionally biased region" description="Gly residues" evidence="5">
    <location>
        <begin position="576"/>
        <end position="590"/>
    </location>
</feature>
<feature type="compositionally biased region" description="Basic and acidic residues" evidence="5">
    <location>
        <begin position="608"/>
        <end position="625"/>
    </location>
</feature>
<feature type="compositionally biased region" description="Acidic residues" evidence="5">
    <location>
        <begin position="629"/>
        <end position="654"/>
    </location>
</feature>
<feature type="compositionally biased region" description="Gly residues" evidence="5">
    <location>
        <begin position="678"/>
        <end position="689"/>
    </location>
</feature>
<feature type="compositionally biased region" description="Low complexity" evidence="5">
    <location>
        <begin position="836"/>
        <end position="846"/>
    </location>
</feature>
<feature type="compositionally biased region" description="Gly residues" evidence="5">
    <location>
        <begin position="883"/>
        <end position="902"/>
    </location>
</feature>
<feature type="compositionally biased region" description="Pro residues" evidence="5">
    <location>
        <begin position="976"/>
        <end position="995"/>
    </location>
</feature>
<feature type="compositionally biased region" description="Basic and acidic residues" evidence="5">
    <location>
        <begin position="997"/>
        <end position="1013"/>
    </location>
</feature>
<feature type="modified residue" description="Phosphoserine" evidence="10 11">
    <location>
        <position position="391"/>
    </location>
</feature>
<feature type="modified residue" description="Phosphothreonine; by HIPK2" evidence="7">
    <location>
        <position position="795"/>
    </location>
</feature>
<feature type="modified residue" description="Phosphothreonine; by HIPK2" evidence="7">
    <location>
        <position position="797"/>
    </location>
</feature>
<feature type="modified residue" description="Phosphothreonine; by HIPK2" evidence="7">
    <location>
        <position position="983"/>
    </location>
</feature>
<feature type="cross-link" description="Glycyl lysine isopeptide (Lys-Gly) (interchain with G-Cter in SUMO2)" evidence="13 14">
    <location>
        <position position="40"/>
    </location>
</feature>
<feature type="cross-link" description="Glycyl lysine isopeptide (Lys-Gly) (interchain with G-Cter in SUMO2)" evidence="14">
    <location>
        <position position="573"/>
    </location>
</feature>
<feature type="cross-link" description="Glycyl lysine isopeptide (Lys-Gly) (interchain with G-Cter in SUMO2)" evidence="12 14">
    <location>
        <position position="615"/>
    </location>
</feature>
<feature type="sequence variant" id="VAR_052913" description="In dbSNP:rs35231078.">
    <original>A</original>
    <variation>V</variation>
    <location>
        <position position="539"/>
    </location>
</feature>
<feature type="sequence variant" id="VAR_018383" description="In dbSNP:rs871990.">
    <original>M</original>
    <variation>I</variation>
    <location>
        <position position="550"/>
    </location>
</feature>
<feature type="sequence variant" id="VAR_052914" description="In dbSNP:rs34914463.">
    <original>N</original>
    <variation>S</variation>
    <location>
        <position position="561"/>
    </location>
</feature>
<feature type="mutagenesis site" description="Impaired HIPK2-mediated phosphorylation; when associated with A-797 and A-983." evidence="7">
    <original>T</original>
    <variation>A</variation>
    <location>
        <position position="795"/>
    </location>
</feature>
<feature type="mutagenesis site" description="Impaired HIPK2-mediated phosphorylation; when associated with A-795 and A-983." evidence="7">
    <original>T</original>
    <variation>A</variation>
    <location>
        <position position="797"/>
    </location>
</feature>
<feature type="mutagenesis site" description="Impaired HIPK2-mediated phosphorylation; when associated with A-795 and A-797." evidence="7">
    <original>T</original>
    <variation>A</variation>
    <location>
        <position position="983"/>
    </location>
</feature>
<feature type="sequence conflict" description="In Ref. 6; AAH43352." evidence="9" ref="6">
    <original>P</original>
    <variation>S</variation>
    <location>
        <position position="188"/>
    </location>
</feature>
<feature type="sequence conflict" description="In Ref. 6; AAH43352." evidence="9" ref="6">
    <original>R</original>
    <variation>C</variation>
    <location>
        <position position="674"/>
    </location>
</feature>
<organism>
    <name type="scientific">Homo sapiens</name>
    <name type="common">Human</name>
    <dbReference type="NCBI Taxonomy" id="9606"/>
    <lineage>
        <taxon>Eukaryota</taxon>
        <taxon>Metazoa</taxon>
        <taxon>Chordata</taxon>
        <taxon>Craniata</taxon>
        <taxon>Vertebrata</taxon>
        <taxon>Euteleostomi</taxon>
        <taxon>Mammalia</taxon>
        <taxon>Eutheria</taxon>
        <taxon>Euarchontoglires</taxon>
        <taxon>Primates</taxon>
        <taxon>Haplorrhini</taxon>
        <taxon>Catarrhini</taxon>
        <taxon>Hominidae</taxon>
        <taxon>Homo</taxon>
    </lineage>
</organism>
<gene>
    <name type="primary">ZBTB4</name>
    <name type="synonym">KIAA1538</name>
</gene>
<keyword id="KW-0158">Chromosome</keyword>
<keyword id="KW-0175">Coiled coil</keyword>
<keyword id="KW-0238">DNA-binding</keyword>
<keyword id="KW-1017">Isopeptide bond</keyword>
<keyword id="KW-0479">Metal-binding</keyword>
<keyword id="KW-0539">Nucleus</keyword>
<keyword id="KW-0597">Phosphoprotein</keyword>
<keyword id="KW-1267">Proteomics identification</keyword>
<keyword id="KW-1185">Reference proteome</keyword>
<keyword id="KW-0677">Repeat</keyword>
<keyword id="KW-0678">Repressor</keyword>
<keyword id="KW-0804">Transcription</keyword>
<keyword id="KW-0805">Transcription regulation</keyword>
<keyword id="KW-0832">Ubl conjugation</keyword>
<keyword id="KW-0862">Zinc</keyword>
<keyword id="KW-0863">Zinc-finger</keyword>
<reference key="1">
    <citation type="submission" date="2003-05" db="EMBL/GenBank/DDBJ databases">
        <title>Identification of a novel zinc-finger-protein encoding gene on 17p13.1.</title>
        <authorList>
            <person name="Weber A."/>
            <person name="Klinkhammer B."/>
            <person name="Glaum A."/>
            <person name="Bergmann E."/>
            <person name="Berwanger B."/>
            <person name="Eilers M."/>
            <person name="Christiansen H."/>
        </authorList>
    </citation>
    <scope>NUCLEOTIDE SEQUENCE [MRNA]</scope>
    <source>
        <tissue>Fetal brain</tissue>
    </source>
</reference>
<reference key="2">
    <citation type="journal article" date="2000" name="DNA Res.">
        <title>Prediction of the coding sequences of unidentified human genes. XVII. The complete sequences of 100 new cDNA clones from brain which code for large proteins in vitro.</title>
        <authorList>
            <person name="Nagase T."/>
            <person name="Kikuno R."/>
            <person name="Ishikawa K."/>
            <person name="Hirosawa M."/>
            <person name="Ohara O."/>
        </authorList>
    </citation>
    <scope>NUCLEOTIDE SEQUENCE [LARGE SCALE MRNA]</scope>
    <source>
        <tissue>Brain</tissue>
    </source>
</reference>
<reference key="3">
    <citation type="journal article" date="2002" name="DNA Res.">
        <title>Construction of expression-ready cDNA clones for KIAA genes: manual curation of 330 KIAA cDNA clones.</title>
        <authorList>
            <person name="Nakajima D."/>
            <person name="Okazaki N."/>
            <person name="Yamakawa H."/>
            <person name="Kikuno R."/>
            <person name="Ohara O."/>
            <person name="Nagase T."/>
        </authorList>
    </citation>
    <scope>SEQUENCE REVISION</scope>
</reference>
<reference key="4">
    <citation type="journal article" date="2004" name="Nat. Genet.">
        <title>Complete sequencing and characterization of 21,243 full-length human cDNAs.</title>
        <authorList>
            <person name="Ota T."/>
            <person name="Suzuki Y."/>
            <person name="Nishikawa T."/>
            <person name="Otsuki T."/>
            <person name="Sugiyama T."/>
            <person name="Irie R."/>
            <person name="Wakamatsu A."/>
            <person name="Hayashi K."/>
            <person name="Sato H."/>
            <person name="Nagai K."/>
            <person name="Kimura K."/>
            <person name="Makita H."/>
            <person name="Sekine M."/>
            <person name="Obayashi M."/>
            <person name="Nishi T."/>
            <person name="Shibahara T."/>
            <person name="Tanaka T."/>
            <person name="Ishii S."/>
            <person name="Yamamoto J."/>
            <person name="Saito K."/>
            <person name="Kawai Y."/>
            <person name="Isono Y."/>
            <person name="Nakamura Y."/>
            <person name="Nagahari K."/>
            <person name="Murakami K."/>
            <person name="Yasuda T."/>
            <person name="Iwayanagi T."/>
            <person name="Wagatsuma M."/>
            <person name="Shiratori A."/>
            <person name="Sudo H."/>
            <person name="Hosoiri T."/>
            <person name="Kaku Y."/>
            <person name="Kodaira H."/>
            <person name="Kondo H."/>
            <person name="Sugawara M."/>
            <person name="Takahashi M."/>
            <person name="Kanda K."/>
            <person name="Yokoi T."/>
            <person name="Furuya T."/>
            <person name="Kikkawa E."/>
            <person name="Omura Y."/>
            <person name="Abe K."/>
            <person name="Kamihara K."/>
            <person name="Katsuta N."/>
            <person name="Sato K."/>
            <person name="Tanikawa M."/>
            <person name="Yamazaki M."/>
            <person name="Ninomiya K."/>
            <person name="Ishibashi T."/>
            <person name="Yamashita H."/>
            <person name="Murakawa K."/>
            <person name="Fujimori K."/>
            <person name="Tanai H."/>
            <person name="Kimata M."/>
            <person name="Watanabe M."/>
            <person name="Hiraoka S."/>
            <person name="Chiba Y."/>
            <person name="Ishida S."/>
            <person name="Ono Y."/>
            <person name="Takiguchi S."/>
            <person name="Watanabe S."/>
            <person name="Yosida M."/>
            <person name="Hotuta T."/>
            <person name="Kusano J."/>
            <person name="Kanehori K."/>
            <person name="Takahashi-Fujii A."/>
            <person name="Hara H."/>
            <person name="Tanase T.-O."/>
            <person name="Nomura Y."/>
            <person name="Togiya S."/>
            <person name="Komai F."/>
            <person name="Hara R."/>
            <person name="Takeuchi K."/>
            <person name="Arita M."/>
            <person name="Imose N."/>
            <person name="Musashino K."/>
            <person name="Yuuki H."/>
            <person name="Oshima A."/>
            <person name="Sasaki N."/>
            <person name="Aotsuka S."/>
            <person name="Yoshikawa Y."/>
            <person name="Matsunawa H."/>
            <person name="Ichihara T."/>
            <person name="Shiohata N."/>
            <person name="Sano S."/>
            <person name="Moriya S."/>
            <person name="Momiyama H."/>
            <person name="Satoh N."/>
            <person name="Takami S."/>
            <person name="Terashima Y."/>
            <person name="Suzuki O."/>
            <person name="Nakagawa S."/>
            <person name="Senoh A."/>
            <person name="Mizoguchi H."/>
            <person name="Goto Y."/>
            <person name="Shimizu F."/>
            <person name="Wakebe H."/>
            <person name="Hishigaki H."/>
            <person name="Watanabe T."/>
            <person name="Sugiyama A."/>
            <person name="Takemoto M."/>
            <person name="Kawakami B."/>
            <person name="Yamazaki M."/>
            <person name="Watanabe K."/>
            <person name="Kumagai A."/>
            <person name="Itakura S."/>
            <person name="Fukuzumi Y."/>
            <person name="Fujimori Y."/>
            <person name="Komiyama M."/>
            <person name="Tashiro H."/>
            <person name="Tanigami A."/>
            <person name="Fujiwara T."/>
            <person name="Ono T."/>
            <person name="Yamada K."/>
            <person name="Fujii Y."/>
            <person name="Ozaki K."/>
            <person name="Hirao M."/>
            <person name="Ohmori Y."/>
            <person name="Kawabata A."/>
            <person name="Hikiji T."/>
            <person name="Kobatake N."/>
            <person name="Inagaki H."/>
            <person name="Ikema Y."/>
            <person name="Okamoto S."/>
            <person name="Okitani R."/>
            <person name="Kawakami T."/>
            <person name="Noguchi S."/>
            <person name="Itoh T."/>
            <person name="Shigeta K."/>
            <person name="Senba T."/>
            <person name="Matsumura K."/>
            <person name="Nakajima Y."/>
            <person name="Mizuno T."/>
            <person name="Morinaga M."/>
            <person name="Sasaki M."/>
            <person name="Togashi T."/>
            <person name="Oyama M."/>
            <person name="Hata H."/>
            <person name="Watanabe M."/>
            <person name="Komatsu T."/>
            <person name="Mizushima-Sugano J."/>
            <person name="Satoh T."/>
            <person name="Shirai Y."/>
            <person name="Takahashi Y."/>
            <person name="Nakagawa K."/>
            <person name="Okumura K."/>
            <person name="Nagase T."/>
            <person name="Nomura N."/>
            <person name="Kikuchi H."/>
            <person name="Masuho Y."/>
            <person name="Yamashita R."/>
            <person name="Nakai K."/>
            <person name="Yada T."/>
            <person name="Nakamura Y."/>
            <person name="Ohara O."/>
            <person name="Isogai T."/>
            <person name="Sugano S."/>
        </authorList>
    </citation>
    <scope>NUCLEOTIDE SEQUENCE [LARGE SCALE MRNA]</scope>
    <source>
        <tissue>Uterus</tissue>
    </source>
</reference>
<reference key="5">
    <citation type="submission" date="2005-09" db="EMBL/GenBank/DDBJ databases">
        <authorList>
            <person name="Mural R.J."/>
            <person name="Istrail S."/>
            <person name="Sutton G.G."/>
            <person name="Florea L."/>
            <person name="Halpern A.L."/>
            <person name="Mobarry C.M."/>
            <person name="Lippert R."/>
            <person name="Walenz B."/>
            <person name="Shatkay H."/>
            <person name="Dew I."/>
            <person name="Miller J.R."/>
            <person name="Flanigan M.J."/>
            <person name="Edwards N.J."/>
            <person name="Bolanos R."/>
            <person name="Fasulo D."/>
            <person name="Halldorsson B.V."/>
            <person name="Hannenhalli S."/>
            <person name="Turner R."/>
            <person name="Yooseph S."/>
            <person name="Lu F."/>
            <person name="Nusskern D.R."/>
            <person name="Shue B.C."/>
            <person name="Zheng X.H."/>
            <person name="Zhong F."/>
            <person name="Delcher A.L."/>
            <person name="Huson D.H."/>
            <person name="Kravitz S.A."/>
            <person name="Mouchard L."/>
            <person name="Reinert K."/>
            <person name="Remington K.A."/>
            <person name="Clark A.G."/>
            <person name="Waterman M.S."/>
            <person name="Eichler E.E."/>
            <person name="Adams M.D."/>
            <person name="Hunkapiller M.W."/>
            <person name="Myers E.W."/>
            <person name="Venter J.C."/>
        </authorList>
    </citation>
    <scope>NUCLEOTIDE SEQUENCE [LARGE SCALE GENOMIC DNA]</scope>
</reference>
<reference key="6">
    <citation type="journal article" date="2004" name="Genome Res.">
        <title>The status, quality, and expansion of the NIH full-length cDNA project: the Mammalian Gene Collection (MGC).</title>
        <authorList>
            <consortium name="The MGC Project Team"/>
        </authorList>
    </citation>
    <scope>NUCLEOTIDE SEQUENCE [LARGE SCALE MRNA]</scope>
    <source>
        <tissue>Brain</tissue>
        <tissue>Uterus</tissue>
    </source>
</reference>
<reference key="7">
    <citation type="journal article" date="2006" name="Mol. Cell. Biol.">
        <title>A family of human zinc finger proteins that bind methylated DNA and repress transcription.</title>
        <authorList>
            <person name="Filion G.J."/>
            <person name="Zhenilo S."/>
            <person name="Salozhin S."/>
            <person name="Yamada D."/>
            <person name="Prokhortchouk E."/>
            <person name="Defossez P.A."/>
        </authorList>
    </citation>
    <scope>FUNCTION</scope>
    <scope>DNA-BINDING</scope>
    <scope>SUBCELLULAR LOCATION</scope>
    <scope>INTERACTION WITH ZBTB38</scope>
</reference>
<reference key="8">
    <citation type="journal article" date="2009" name="Oncogene">
        <title>The human protein kinase HIPK2 phosphorylates and downregulates the methyl-binding transcription factor ZBTB4.</title>
        <authorList>
            <person name="Yamada D."/>
            <person name="Perez-Torrado R."/>
            <person name="Filion G."/>
            <person name="Caly M."/>
            <person name="Jammart B."/>
            <person name="Devignot V."/>
            <person name="Sasai N."/>
            <person name="Ravassard P."/>
            <person name="Mallet J."/>
            <person name="Sastre-Garau X."/>
            <person name="Schmitz M.L."/>
            <person name="Defossez P.A."/>
        </authorList>
    </citation>
    <scope>PHOSPHORYLATION AT THR-795; THR-797 AND THR-983 BY HIPK2</scope>
    <scope>MUTAGENESIS OF THR-795; THR-797 AND THR-983</scope>
    <scope>INTERACTION WITH HIPK2</scope>
</reference>
<reference key="9">
    <citation type="journal article" date="2010" name="Sci. Signal.">
        <title>Quantitative phosphoproteomics reveals widespread full phosphorylation site occupancy during mitosis.</title>
        <authorList>
            <person name="Olsen J.V."/>
            <person name="Vermeulen M."/>
            <person name="Santamaria A."/>
            <person name="Kumar C."/>
            <person name="Miller M.L."/>
            <person name="Jensen L.J."/>
            <person name="Gnad F."/>
            <person name="Cox J."/>
            <person name="Jensen T.S."/>
            <person name="Nigg E.A."/>
            <person name="Brunak S."/>
            <person name="Mann M."/>
        </authorList>
    </citation>
    <scope>PHOSPHORYLATION [LARGE SCALE ANALYSIS] AT SER-391</scope>
    <scope>IDENTIFICATION BY MASS SPECTROMETRY [LARGE SCALE ANALYSIS]</scope>
    <source>
        <tissue>Cervix carcinoma</tissue>
    </source>
</reference>
<reference key="10">
    <citation type="journal article" date="2012" name="PLoS ONE">
        <title>Kaiso directs the transcriptional corepressor MTG16 to the Kaiso binding site in target promoters.</title>
        <authorList>
            <person name="Barrett C.W."/>
            <person name="Smith J.J."/>
            <person name="Lu L.C."/>
            <person name="Markham N."/>
            <person name="Stengel K.R."/>
            <person name="Short S.P."/>
            <person name="Zhang B."/>
            <person name="Hunt A.A."/>
            <person name="Fingleton B.M."/>
            <person name="Carnahan R.H."/>
            <person name="Engel M.E."/>
            <person name="Chen X."/>
            <person name="Beauchamp R.D."/>
            <person name="Wilson K.T."/>
            <person name="Hiebert S.W."/>
            <person name="Reynolds A.B."/>
            <person name="Williams C.S."/>
        </authorList>
    </citation>
    <scope>INTERACTION WITH CBFA2T3</scope>
</reference>
<reference key="11">
    <citation type="journal article" date="2013" name="J. Proteome Res.">
        <title>Toward a comprehensive characterization of a human cancer cell phosphoproteome.</title>
        <authorList>
            <person name="Zhou H."/>
            <person name="Di Palma S."/>
            <person name="Preisinger C."/>
            <person name="Peng M."/>
            <person name="Polat A.N."/>
            <person name="Heck A.J."/>
            <person name="Mohammed S."/>
        </authorList>
    </citation>
    <scope>PHOSPHORYLATION [LARGE SCALE ANALYSIS] AT SER-391</scope>
    <scope>IDENTIFICATION BY MASS SPECTROMETRY [LARGE SCALE ANALYSIS]</scope>
    <source>
        <tissue>Cervix carcinoma</tissue>
    </source>
</reference>
<reference key="12">
    <citation type="journal article" date="2014" name="Nat. Struct. Mol. Biol.">
        <title>Uncovering global SUMOylation signaling networks in a site-specific manner.</title>
        <authorList>
            <person name="Hendriks I.A."/>
            <person name="D'Souza R.C."/>
            <person name="Yang B."/>
            <person name="Verlaan-de Vries M."/>
            <person name="Mann M."/>
            <person name="Vertegaal A.C."/>
        </authorList>
    </citation>
    <scope>SUMOYLATION [LARGE SCALE ANALYSIS] AT LYS-615</scope>
    <scope>IDENTIFICATION BY MASS SPECTROMETRY [LARGE SCALE ANALYSIS]</scope>
</reference>
<reference key="13">
    <citation type="journal article" date="2015" name="Mol. Cell. Proteomics">
        <title>System-wide analysis of SUMOylation dynamics in response to replication stress reveals novel small ubiquitin-like modified target proteins and acceptor lysines relevant for genome stability.</title>
        <authorList>
            <person name="Xiao Z."/>
            <person name="Chang J.G."/>
            <person name="Hendriks I.A."/>
            <person name="Sigurdsson J.O."/>
            <person name="Olsen J.V."/>
            <person name="Vertegaal A.C."/>
        </authorList>
    </citation>
    <scope>SUMOYLATION [LARGE SCALE ANALYSIS] AT LYS-40</scope>
    <scope>IDENTIFICATION BY MASS SPECTROMETRY [LARGE SCALE ANALYSIS]</scope>
</reference>
<reference key="14">
    <citation type="journal article" date="2017" name="Nat. Struct. Mol. Biol.">
        <title>Site-specific mapping of the human SUMO proteome reveals co-modification with phosphorylation.</title>
        <authorList>
            <person name="Hendriks I.A."/>
            <person name="Lyon D."/>
            <person name="Young C."/>
            <person name="Jensen L.J."/>
            <person name="Vertegaal A.C."/>
            <person name="Nielsen M.L."/>
        </authorList>
    </citation>
    <scope>SUMOYLATION [LARGE SCALE ANALYSIS] AT LYS-40; LYS-573 AND LYS-615</scope>
    <scope>IDENTIFICATION BY MASS SPECTROMETRY [LARGE SCALE ANALYSIS]</scope>
</reference>
<name>ZBTB4_HUMAN</name>
<evidence type="ECO:0000250" key="1">
    <source>
        <dbReference type="UniProtKB" id="Q5F293"/>
    </source>
</evidence>
<evidence type="ECO:0000255" key="2"/>
<evidence type="ECO:0000255" key="3">
    <source>
        <dbReference type="PROSITE-ProRule" id="PRU00037"/>
    </source>
</evidence>
<evidence type="ECO:0000255" key="4">
    <source>
        <dbReference type="PROSITE-ProRule" id="PRU00042"/>
    </source>
</evidence>
<evidence type="ECO:0000256" key="5">
    <source>
        <dbReference type="SAM" id="MobiDB-lite"/>
    </source>
</evidence>
<evidence type="ECO:0000269" key="6">
    <source>
    </source>
</evidence>
<evidence type="ECO:0000269" key="7">
    <source>
    </source>
</evidence>
<evidence type="ECO:0000269" key="8">
    <source>
    </source>
</evidence>
<evidence type="ECO:0000305" key="9"/>
<evidence type="ECO:0007744" key="10">
    <source>
    </source>
</evidence>
<evidence type="ECO:0007744" key="11">
    <source>
    </source>
</evidence>
<evidence type="ECO:0007744" key="12">
    <source>
    </source>
</evidence>
<evidence type="ECO:0007744" key="13">
    <source>
    </source>
</evidence>
<evidence type="ECO:0007744" key="14">
    <source>
    </source>
</evidence>
<accession>Q9P1Z0</accession>
<accession>B3KVL6</accession>
<accession>Q7Z697</accession>
<accession>Q86XJ4</accession>
<accession>Q8N4V8</accession>
<sequence length="1013" mass="105114">MPPPAEVTDPSHAPAVLRQLNEQRLRGLFCDVTLIAGDTKFPAHRSVLAASSPFFREALLTSAPLPLPPATGGAAPNPATTTAASSSSSSSSSSSSSSSSASSSSSSSSSSPPPASPPASSPPRVLELPGVPAAAFSDVLNFIYSARLALPGGGGDGAAVAEIGALGRRLGISRLQGLGEGGDAWVPPTPAPMATSQPEEDSFGPGPRPAGEWEGDRAEAQAPDLQCSLPRRPLPCPQCGKSFIHPKRLQTHEAQCRRGASTRGSTGLGAGGAGPGGPAGVDASALPPPVGFRGGPEHVVKVVGGHVLYVCAACERSYVTLSSLKRHSNVHSWRRKYPCRYCEKVFALAEYRTKHEVWHTGERRYQCIFCWETFVTYYNLKTHQRAFHGISPGLLASEKTPNGGYKPKLNTLKLYRLLPMRAAKRPYKTYSQGAPEAPLSPTLNTPAPVAMPASPPPGPPPAPEPGPPPSVITFAHPAPSVIVHGGSSSGGGGSGTASTGGSQAASVITYTAPPRPPKKREYPPPPPEPAATPTSPATAVSPATAAGPAMATTTEEAKGRNPRAGRTLTYTAKPVGGIGGGGGPPTGAGRGPSQLQAPPPLCQITVRIGEEAIVKRRISETDLRPGELSGEEMEESEEDEEEEDEEEEEEDEEESKAGGEDQLWRPYYSYKPKRKAGAAGGASVGGSGLPRGRRPPRWRQKLERRSWEETPAAESPAGRARTERRHRCGDCAQTFTTLRKLRKHQEAHGGGSHSSRAGRRPSTRFTCPHCAKVCKTAAALSRHGQRHAAERPGGTPTPVIAYSKGSAGTRPGDVKEEAPQEMQVSSSSGEAGGGSTAAEEASETASLQDPIISGGEEPPVVASGGSYVYPPVQEFPLALIGGGREPGGGRGKSGSEGPVGAGEGDRMEGIGAAKVTFYPEPYPLVYGPQLLAAYPYNFSNLAALPVALNMVLPDEKGAGALPFLPGVFGYAVNPQAAPPAPPTPPPPTLPPPIPPKGEGERAGVERTQKGDVG</sequence>